<dbReference type="EC" id="3.1.1.85" evidence="2"/>
<dbReference type="EMBL" id="FM200053">
    <property type="protein sequence ID" value="CAR61404.1"/>
    <property type="molecule type" value="Genomic_DNA"/>
</dbReference>
<dbReference type="RefSeq" id="WP_000998145.1">
    <property type="nucleotide sequence ID" value="NC_011147.1"/>
</dbReference>
<dbReference type="SMR" id="B5BHG7"/>
<dbReference type="ESTHER" id="salty-BIOH">
    <property type="family name" value="BioH"/>
</dbReference>
<dbReference type="KEGG" id="sek:SSPA3149"/>
<dbReference type="HOGENOM" id="CLU_020336_12_2_6"/>
<dbReference type="UniPathway" id="UPA00078"/>
<dbReference type="Proteomes" id="UP000001869">
    <property type="component" value="Chromosome"/>
</dbReference>
<dbReference type="GO" id="GO:0005737">
    <property type="term" value="C:cytoplasm"/>
    <property type="evidence" value="ECO:0007669"/>
    <property type="project" value="UniProtKB-SubCell"/>
</dbReference>
<dbReference type="GO" id="GO:0090499">
    <property type="term" value="F:pimelyl-[acyl-carrier protein] methyl ester esterase activity"/>
    <property type="evidence" value="ECO:0007669"/>
    <property type="project" value="UniProtKB-EC"/>
</dbReference>
<dbReference type="GO" id="GO:0009102">
    <property type="term" value="P:biotin biosynthetic process"/>
    <property type="evidence" value="ECO:0007669"/>
    <property type="project" value="UniProtKB-UniRule"/>
</dbReference>
<dbReference type="FunFam" id="3.40.50.1820:FF:000045">
    <property type="entry name" value="Pimeloyl-[acyl-carrier protein] methyl ester esterase"/>
    <property type="match status" value="1"/>
</dbReference>
<dbReference type="Gene3D" id="3.40.50.1820">
    <property type="entry name" value="alpha/beta hydrolase"/>
    <property type="match status" value="1"/>
</dbReference>
<dbReference type="HAMAP" id="MF_01260">
    <property type="entry name" value="Carboxylester"/>
    <property type="match status" value="1"/>
</dbReference>
<dbReference type="InterPro" id="IPR000073">
    <property type="entry name" value="AB_hydrolase_1"/>
</dbReference>
<dbReference type="InterPro" id="IPR029058">
    <property type="entry name" value="AB_hydrolase_fold"/>
</dbReference>
<dbReference type="InterPro" id="IPR010076">
    <property type="entry name" value="BioH"/>
</dbReference>
<dbReference type="InterPro" id="IPR050228">
    <property type="entry name" value="Carboxylesterase_BioH"/>
</dbReference>
<dbReference type="NCBIfam" id="TIGR01738">
    <property type="entry name" value="bioH"/>
    <property type="match status" value="1"/>
</dbReference>
<dbReference type="NCBIfam" id="NF007674">
    <property type="entry name" value="PRK10349.1"/>
    <property type="match status" value="1"/>
</dbReference>
<dbReference type="PANTHER" id="PTHR43194">
    <property type="entry name" value="HYDROLASE ALPHA/BETA FOLD FAMILY"/>
    <property type="match status" value="1"/>
</dbReference>
<dbReference type="PANTHER" id="PTHR43194:SF5">
    <property type="entry name" value="PIMELOYL-[ACYL-CARRIER PROTEIN] METHYL ESTER ESTERASE"/>
    <property type="match status" value="1"/>
</dbReference>
<dbReference type="Pfam" id="PF00561">
    <property type="entry name" value="Abhydrolase_1"/>
    <property type="match status" value="1"/>
</dbReference>
<dbReference type="SUPFAM" id="SSF53474">
    <property type="entry name" value="alpha/beta-Hydrolases"/>
    <property type="match status" value="1"/>
</dbReference>
<sequence length="256" mass="28241">MNDIWWQTYGEGNCHLVLLHGWGLNAEVWHCIREELGSHFTLHLVDLPGYGRSSGFGAMTLEEMTAQVAKNAPDQAIWLGWSLGGLVASQMALTHPERVQALVTVASSPCFSAREGWPGIKPEILGGFQQQLSDDFQRTVERFLALQTLGTETARQDARTLKSVVLAQPMPDVEVLNGGLEILKTVDLREALKNVNMPFLRLYGYLDGLVPRKIAPLLDTLWPHSTSQIMAKAAHAPFISHPAAFCQALMTLKSSL</sequence>
<name>BIOH_SALPK</name>
<organism>
    <name type="scientific">Salmonella paratyphi A (strain AKU_12601)</name>
    <dbReference type="NCBI Taxonomy" id="554290"/>
    <lineage>
        <taxon>Bacteria</taxon>
        <taxon>Pseudomonadati</taxon>
        <taxon>Pseudomonadota</taxon>
        <taxon>Gammaproteobacteria</taxon>
        <taxon>Enterobacterales</taxon>
        <taxon>Enterobacteriaceae</taxon>
        <taxon>Salmonella</taxon>
    </lineage>
</organism>
<proteinExistence type="inferred from homology"/>
<keyword id="KW-0093">Biotin biosynthesis</keyword>
<keyword id="KW-0963">Cytoplasm</keyword>
<keyword id="KW-0378">Hydrolase</keyword>
<keyword id="KW-0719">Serine esterase</keyword>
<gene>
    <name evidence="2" type="primary">bioH</name>
    <name type="ordered locus">SSPA3149</name>
</gene>
<feature type="chain" id="PRO_1000140003" description="Pimeloyl-[acyl-carrier protein] methyl ester esterase">
    <location>
        <begin position="1"/>
        <end position="256"/>
    </location>
</feature>
<feature type="domain" description="AB hydrolase-1" evidence="1">
    <location>
        <begin position="15"/>
        <end position="242"/>
    </location>
</feature>
<feature type="active site" description="Nucleophile" evidence="2">
    <location>
        <position position="82"/>
    </location>
</feature>
<feature type="active site" evidence="2">
    <location>
        <position position="207"/>
    </location>
</feature>
<feature type="active site" evidence="2">
    <location>
        <position position="235"/>
    </location>
</feature>
<feature type="binding site" evidence="2">
    <location>
        <position position="22"/>
    </location>
    <ligand>
        <name>substrate</name>
    </ligand>
</feature>
<feature type="binding site" evidence="2">
    <location>
        <begin position="82"/>
        <end position="83"/>
    </location>
    <ligand>
        <name>substrate</name>
    </ligand>
</feature>
<feature type="binding site" evidence="2">
    <location>
        <begin position="143"/>
        <end position="147"/>
    </location>
    <ligand>
        <name>substrate</name>
    </ligand>
</feature>
<feature type="binding site" evidence="2">
    <location>
        <position position="235"/>
    </location>
    <ligand>
        <name>substrate</name>
    </ligand>
</feature>
<reference key="1">
    <citation type="journal article" date="2009" name="BMC Genomics">
        <title>Pseudogene accumulation in the evolutionary histories of Salmonella enterica serovars Paratyphi A and Typhi.</title>
        <authorList>
            <person name="Holt K.E."/>
            <person name="Thomson N.R."/>
            <person name="Wain J."/>
            <person name="Langridge G.C."/>
            <person name="Hasan R."/>
            <person name="Bhutta Z.A."/>
            <person name="Quail M.A."/>
            <person name="Norbertczak H."/>
            <person name="Walker D."/>
            <person name="Simmonds M."/>
            <person name="White B."/>
            <person name="Bason N."/>
            <person name="Mungall K."/>
            <person name="Dougan G."/>
            <person name="Parkhill J."/>
        </authorList>
    </citation>
    <scope>NUCLEOTIDE SEQUENCE [LARGE SCALE GENOMIC DNA]</scope>
    <source>
        <strain>AKU_12601</strain>
    </source>
</reference>
<protein>
    <recommendedName>
        <fullName evidence="2">Pimeloyl-[acyl-carrier protein] methyl ester esterase</fullName>
        <ecNumber evidence="2">3.1.1.85</ecNumber>
    </recommendedName>
    <alternativeName>
        <fullName evidence="2">Biotin synthesis protein BioH</fullName>
    </alternativeName>
    <alternativeName>
        <fullName evidence="2">Carboxylesterase BioH</fullName>
    </alternativeName>
</protein>
<evidence type="ECO:0000255" key="1"/>
<evidence type="ECO:0000255" key="2">
    <source>
        <dbReference type="HAMAP-Rule" id="MF_01260"/>
    </source>
</evidence>
<comment type="function">
    <text evidence="2">The physiological role of BioH is to remove the methyl group introduced by BioC when the pimeloyl moiety is complete. It allows to synthesize pimeloyl-ACP via the fatty acid synthetic pathway through the hydrolysis of the ester bonds of pimeloyl-ACP esters.</text>
</comment>
<comment type="catalytic activity">
    <reaction evidence="2">
        <text>6-carboxyhexanoyl-[ACP] methyl ester + H2O = 6-carboxyhexanoyl-[ACP] + methanol + H(+)</text>
        <dbReference type="Rhea" id="RHEA:42700"/>
        <dbReference type="Rhea" id="RHEA-COMP:9955"/>
        <dbReference type="Rhea" id="RHEA-COMP:10186"/>
        <dbReference type="ChEBI" id="CHEBI:15377"/>
        <dbReference type="ChEBI" id="CHEBI:15378"/>
        <dbReference type="ChEBI" id="CHEBI:17790"/>
        <dbReference type="ChEBI" id="CHEBI:78846"/>
        <dbReference type="ChEBI" id="CHEBI:82735"/>
        <dbReference type="EC" id="3.1.1.85"/>
    </reaction>
</comment>
<comment type="pathway">
    <text evidence="2">Cofactor biosynthesis; biotin biosynthesis.</text>
</comment>
<comment type="subunit">
    <text evidence="2">Monomer.</text>
</comment>
<comment type="subcellular location">
    <subcellularLocation>
        <location evidence="2">Cytoplasm</location>
    </subcellularLocation>
</comment>
<comment type="similarity">
    <text evidence="2">Belongs to the AB hydrolase superfamily. Carboxylesterase BioH family.</text>
</comment>
<accession>B5BHG7</accession>